<feature type="chain" id="PRO_0000331184" description="Spermidine export protein MdtJ">
    <location>
        <begin position="1"/>
        <end position="126"/>
    </location>
</feature>
<feature type="transmembrane region" description="Helical" evidence="1">
    <location>
        <begin position="1"/>
        <end position="21"/>
    </location>
</feature>
<feature type="transmembrane region" description="Helical" evidence="1">
    <location>
        <begin position="30"/>
        <end position="50"/>
    </location>
</feature>
<feature type="transmembrane region" description="Helical" evidence="1">
    <location>
        <begin position="54"/>
        <end position="74"/>
    </location>
</feature>
<feature type="transmembrane region" description="Helical" evidence="1">
    <location>
        <begin position="81"/>
        <end position="101"/>
    </location>
</feature>
<proteinExistence type="inferred from homology"/>
<dbReference type="EMBL" id="AP008232">
    <property type="protein sequence ID" value="BAE73905.1"/>
    <property type="molecule type" value="Genomic_DNA"/>
</dbReference>
<dbReference type="RefSeq" id="WP_011410383.1">
    <property type="nucleotide sequence ID" value="NC_007712.1"/>
</dbReference>
<dbReference type="SMR" id="Q2NVC0"/>
<dbReference type="STRING" id="343509.SG0630"/>
<dbReference type="KEGG" id="sgl:SG0630"/>
<dbReference type="eggNOG" id="COG2076">
    <property type="taxonomic scope" value="Bacteria"/>
</dbReference>
<dbReference type="HOGENOM" id="CLU_133067_0_0_6"/>
<dbReference type="OrthoDB" id="9808638at2"/>
<dbReference type="BioCyc" id="SGLO343509:SGP1_RS05455-MONOMER"/>
<dbReference type="Proteomes" id="UP000001932">
    <property type="component" value="Chromosome"/>
</dbReference>
<dbReference type="GO" id="GO:0005886">
    <property type="term" value="C:plasma membrane"/>
    <property type="evidence" value="ECO:0007669"/>
    <property type="project" value="UniProtKB-SubCell"/>
</dbReference>
<dbReference type="GO" id="GO:0015199">
    <property type="term" value="F:amino-acid betaine transmembrane transporter activity"/>
    <property type="evidence" value="ECO:0007669"/>
    <property type="project" value="TreeGrafter"/>
</dbReference>
<dbReference type="GO" id="GO:0015297">
    <property type="term" value="F:antiporter activity"/>
    <property type="evidence" value="ECO:0007669"/>
    <property type="project" value="TreeGrafter"/>
</dbReference>
<dbReference type="GO" id="GO:0015220">
    <property type="term" value="F:choline transmembrane transporter activity"/>
    <property type="evidence" value="ECO:0007669"/>
    <property type="project" value="TreeGrafter"/>
</dbReference>
<dbReference type="GO" id="GO:0015606">
    <property type="term" value="F:spermidine transmembrane transporter activity"/>
    <property type="evidence" value="ECO:0007669"/>
    <property type="project" value="UniProtKB-UniRule"/>
</dbReference>
<dbReference type="GO" id="GO:0031460">
    <property type="term" value="P:glycine betaine transport"/>
    <property type="evidence" value="ECO:0007669"/>
    <property type="project" value="TreeGrafter"/>
</dbReference>
<dbReference type="FunFam" id="1.10.3730.20:FF:000001">
    <property type="entry name" value="Quaternary ammonium compound resistance transporter SugE"/>
    <property type="match status" value="1"/>
</dbReference>
<dbReference type="Gene3D" id="1.10.3730.20">
    <property type="match status" value="1"/>
</dbReference>
<dbReference type="HAMAP" id="MF_01598">
    <property type="entry name" value="MdtJ"/>
    <property type="match status" value="1"/>
</dbReference>
<dbReference type="InterPro" id="IPR000390">
    <property type="entry name" value="Small_drug/metabolite_transptr"/>
</dbReference>
<dbReference type="InterPro" id="IPR045324">
    <property type="entry name" value="Small_multidrug_res"/>
</dbReference>
<dbReference type="InterPro" id="IPR023740">
    <property type="entry name" value="Spermidine_export_MdtJ"/>
</dbReference>
<dbReference type="NCBIfam" id="NF007767">
    <property type="entry name" value="PRK10452.1"/>
    <property type="match status" value="1"/>
</dbReference>
<dbReference type="PANTHER" id="PTHR30561">
    <property type="entry name" value="SMR FAMILY PROTON-DEPENDENT DRUG EFFLUX TRANSPORTER SUGE"/>
    <property type="match status" value="1"/>
</dbReference>
<dbReference type="PANTHER" id="PTHR30561:SF2">
    <property type="entry name" value="SPERMIDINE EXPORT PROTEIN MDTJ"/>
    <property type="match status" value="1"/>
</dbReference>
<dbReference type="Pfam" id="PF00893">
    <property type="entry name" value="Multi_Drug_Res"/>
    <property type="match status" value="1"/>
</dbReference>
<dbReference type="SUPFAM" id="SSF103481">
    <property type="entry name" value="Multidrug resistance efflux transporter EmrE"/>
    <property type="match status" value="1"/>
</dbReference>
<gene>
    <name evidence="1" type="primary">mdtJ</name>
    <name type="ordered locus">SG0630</name>
</gene>
<accession>Q2NVC0</accession>
<protein>
    <recommendedName>
        <fullName evidence="1">Spermidine export protein MdtJ</fullName>
    </recommendedName>
</protein>
<evidence type="ECO:0000255" key="1">
    <source>
        <dbReference type="HAMAP-Rule" id="MF_01598"/>
    </source>
</evidence>
<reference key="1">
    <citation type="journal article" date="2006" name="Genome Res.">
        <title>Massive genome erosion and functional adaptations provide insights into the symbiotic lifestyle of Sodalis glossinidius in the tsetse host.</title>
        <authorList>
            <person name="Toh H."/>
            <person name="Weiss B.L."/>
            <person name="Perkin S.A.H."/>
            <person name="Yamashita A."/>
            <person name="Oshima K."/>
            <person name="Hattori M."/>
            <person name="Aksoy S."/>
        </authorList>
    </citation>
    <scope>NUCLEOTIDE SEQUENCE [LARGE SCALE GENOMIC DNA]</scope>
    <source>
        <strain>morsitans</strain>
    </source>
</reference>
<organism>
    <name type="scientific">Sodalis glossinidius (strain morsitans)</name>
    <dbReference type="NCBI Taxonomy" id="343509"/>
    <lineage>
        <taxon>Bacteria</taxon>
        <taxon>Pseudomonadati</taxon>
        <taxon>Pseudomonadota</taxon>
        <taxon>Gammaproteobacteria</taxon>
        <taxon>Enterobacterales</taxon>
        <taxon>Bruguierivoracaceae</taxon>
        <taxon>Sodalis</taxon>
    </lineage>
</organism>
<keyword id="KW-0997">Cell inner membrane</keyword>
<keyword id="KW-1003">Cell membrane</keyword>
<keyword id="KW-0472">Membrane</keyword>
<keyword id="KW-0812">Transmembrane</keyword>
<keyword id="KW-1133">Transmembrane helix</keyword>
<keyword id="KW-0813">Transport</keyword>
<name>MDTJ_SODGM</name>
<comment type="function">
    <text evidence="1">Catalyzes the excretion of spermidine.</text>
</comment>
<comment type="subunit">
    <text evidence="1">Forms a complex with MdtI.</text>
</comment>
<comment type="subcellular location">
    <subcellularLocation>
        <location evidence="1">Cell inner membrane</location>
        <topology evidence="1">Multi-pass membrane protein</topology>
    </subcellularLocation>
</comment>
<comment type="similarity">
    <text evidence="1">Belongs to the drug/metabolite transporter (DMT) superfamily. Small multidrug resistance (SMR) (TC 2.A.7.1) family. MdtJ subfamily.</text>
</comment>
<sequence>MIYWIFLALAITAEVIGTLSMKYATVNGQITGHIVMYIMITASYILLSLAIKRVALGVAYALWEGIGILFITLFSVMWFDEPFSLTKLAGLAILVIGIVMLKSGTRKAQGDSGLKARQKERHHATV</sequence>